<evidence type="ECO:0000255" key="1">
    <source>
        <dbReference type="HAMAP-Rule" id="MF_01600"/>
    </source>
</evidence>
<feature type="chain" id="PRO_5000127088" description="UPF0182 protein Tery_4385">
    <location>
        <begin position="1"/>
        <end position="919"/>
    </location>
</feature>
<feature type="transmembrane region" description="Helical" evidence="1">
    <location>
        <begin position="6"/>
        <end position="26"/>
    </location>
</feature>
<feature type="transmembrane region" description="Helical" evidence="1">
    <location>
        <begin position="52"/>
        <end position="72"/>
    </location>
</feature>
<feature type="transmembrane region" description="Helical" evidence="1">
    <location>
        <begin position="96"/>
        <end position="116"/>
    </location>
</feature>
<feature type="transmembrane region" description="Helical" evidence="1">
    <location>
        <begin position="160"/>
        <end position="180"/>
    </location>
</feature>
<feature type="transmembrane region" description="Helical" evidence="1">
    <location>
        <begin position="198"/>
        <end position="218"/>
    </location>
</feature>
<feature type="transmembrane region" description="Helical" evidence="1">
    <location>
        <begin position="243"/>
        <end position="263"/>
    </location>
</feature>
<feature type="transmembrane region" description="Helical" evidence="1">
    <location>
        <begin position="268"/>
        <end position="288"/>
    </location>
</feature>
<accession>Q10WK0</accession>
<gene>
    <name type="ordered locus">Tery_4385</name>
</gene>
<keyword id="KW-1003">Cell membrane</keyword>
<keyword id="KW-0472">Membrane</keyword>
<keyword id="KW-0812">Transmembrane</keyword>
<keyword id="KW-1133">Transmembrane helix</keyword>
<sequence>MKIRNYIIIAISVILLVVFSLSRTLVHLLTEAWWFNTVDFANIFWTRLNWQIFLWVGAFVIYFLFLWSNYWIAEKLTSDRSFNILLGTELAPYRNIFVKIIFLVNITLISLSAATATSPAWETFLKFLNAVDFPNQDPIYQRNIGFYIFRLPLYEGIKEWLFTLVFAGLIISIIVYALKGKFTAGRQWQNFLTGSIKTHISLLLAGVTILIAVGFWFERYELLFDSNGVVFGAGYTDVHAKLFAYWAMAIVALLLAVVCVLSVWKNNIIWPTYGIVIYIVLLGLFNVLYPWFQQKFIVNPNELQKEKPYIANNIKFTREAYGLDNVETKSFPAKFELDSQTLKNNQGTVRNITLWDYRPLLSTYRQLQEMRLYYQFNDVDIDRYTIDGNYRQVMLSPREMVYSQVPRKAQTWVNKHLKYTHGYGLVMNPVNEVKADGLPVLFIKDIPPVSQVNLQVKEPAIYYGEKTDTHIFTGMSTEEFDYPRSGENAFTFYSGTGGVPVNSLWRKLAYAYDLSSINILISGYFTDNSKIHYYRNIKERVNQVAPFLRFDNDPYIALIDGKIQWILDAYTVSDRYPYSEPLYLSNNARAILNRGNIERIARGNVNYIRNSVKVMVDAYNGTMKFFVVDENDPVLNTYRKIFPQLFTEKSAIPTNVKAHFRYPLDLFKIKAQMYLSYHMSNPQLFYNQEDLWRFPTEVYEDNKQLMEPYYLIMRLPEKKGEEFVLILPFTPVNKDNMIAWMAAESDGDNYGKLLLYEFPKQKLVYGPSQIEARIDQNPKISQQLTLWSQKGSKVIRGDLLVIPIEESLMYIEPIYLRAEQGELPELKRVIVAYDKEVVMTETLSKSLETIFGMEVKQPEVKVTEKTPETKNISELINSIVEAYSQTEAARRKDNWVEYGKSKQKFEQLLQQLKKQTESN</sequence>
<organism>
    <name type="scientific">Trichodesmium erythraeum (strain IMS101)</name>
    <dbReference type="NCBI Taxonomy" id="203124"/>
    <lineage>
        <taxon>Bacteria</taxon>
        <taxon>Bacillati</taxon>
        <taxon>Cyanobacteriota</taxon>
        <taxon>Cyanophyceae</taxon>
        <taxon>Oscillatoriophycideae</taxon>
        <taxon>Oscillatoriales</taxon>
        <taxon>Microcoleaceae</taxon>
        <taxon>Trichodesmium</taxon>
    </lineage>
</organism>
<comment type="subcellular location">
    <subcellularLocation>
        <location evidence="1">Cell membrane</location>
        <topology evidence="1">Multi-pass membrane protein</topology>
    </subcellularLocation>
</comment>
<comment type="similarity">
    <text evidence="1">Belongs to the UPF0182 family.</text>
</comment>
<reference key="1">
    <citation type="journal article" date="2015" name="Proc. Natl. Acad. Sci. U.S.A.">
        <title>Trichodesmium genome maintains abundant, widespread noncoding DNA in situ, despite oligotrophic lifestyle.</title>
        <authorList>
            <person name="Walworth N."/>
            <person name="Pfreundt U."/>
            <person name="Nelson W.C."/>
            <person name="Mincer T."/>
            <person name="Heidelberg J.F."/>
            <person name="Fu F."/>
            <person name="Waterbury J.B."/>
            <person name="Glavina del Rio T."/>
            <person name="Goodwin L."/>
            <person name="Kyrpides N.C."/>
            <person name="Land M.L."/>
            <person name="Woyke T."/>
            <person name="Hutchins D.A."/>
            <person name="Hess W.R."/>
            <person name="Webb E.A."/>
        </authorList>
    </citation>
    <scope>NUCLEOTIDE SEQUENCE [LARGE SCALE GENOMIC DNA]</scope>
    <source>
        <strain>IMS101</strain>
    </source>
</reference>
<protein>
    <recommendedName>
        <fullName evidence="1">UPF0182 protein Tery_4385</fullName>
    </recommendedName>
</protein>
<dbReference type="EMBL" id="CP000393">
    <property type="protein sequence ID" value="ABG53374.1"/>
    <property type="molecule type" value="Genomic_DNA"/>
</dbReference>
<dbReference type="RefSeq" id="WP_011613700.1">
    <property type="nucleotide sequence ID" value="NC_008312.1"/>
</dbReference>
<dbReference type="SMR" id="Q10WK0"/>
<dbReference type="KEGG" id="ter:Tery_4385"/>
<dbReference type="eggNOG" id="COG1615">
    <property type="taxonomic scope" value="Bacteria"/>
</dbReference>
<dbReference type="HOGENOM" id="CLU_007733_0_0_3"/>
<dbReference type="OrthoDB" id="9763654at2"/>
<dbReference type="GO" id="GO:0005576">
    <property type="term" value="C:extracellular region"/>
    <property type="evidence" value="ECO:0007669"/>
    <property type="project" value="TreeGrafter"/>
</dbReference>
<dbReference type="GO" id="GO:0005886">
    <property type="term" value="C:plasma membrane"/>
    <property type="evidence" value="ECO:0007669"/>
    <property type="project" value="UniProtKB-SubCell"/>
</dbReference>
<dbReference type="HAMAP" id="MF_01600">
    <property type="entry name" value="UPF0182"/>
    <property type="match status" value="1"/>
</dbReference>
<dbReference type="InterPro" id="IPR005372">
    <property type="entry name" value="UPF0182"/>
</dbReference>
<dbReference type="PANTHER" id="PTHR39344">
    <property type="entry name" value="UPF0182 PROTEIN SLL1060"/>
    <property type="match status" value="1"/>
</dbReference>
<dbReference type="PANTHER" id="PTHR39344:SF1">
    <property type="entry name" value="UPF0182 PROTEIN SLL1060"/>
    <property type="match status" value="1"/>
</dbReference>
<dbReference type="Pfam" id="PF03699">
    <property type="entry name" value="UPF0182"/>
    <property type="match status" value="1"/>
</dbReference>
<proteinExistence type="inferred from homology"/>
<name>Y4385_TRIEI</name>